<dbReference type="EMBL" id="AE017355">
    <property type="protein sequence ID" value="AAT63885.1"/>
    <property type="molecule type" value="Genomic_DNA"/>
</dbReference>
<dbReference type="RefSeq" id="WP_000090788.1">
    <property type="nucleotide sequence ID" value="NC_005957.1"/>
</dbReference>
<dbReference type="RefSeq" id="YP_034486.1">
    <property type="nucleotide sequence ID" value="NC_005957.1"/>
</dbReference>
<dbReference type="SMR" id="Q6HPN4"/>
<dbReference type="GeneID" id="93010918"/>
<dbReference type="KEGG" id="btk:BT9727_0130"/>
<dbReference type="PATRIC" id="fig|281309.8.peg.132"/>
<dbReference type="HOGENOM" id="CLU_103849_1_1_9"/>
<dbReference type="Proteomes" id="UP000001301">
    <property type="component" value="Chromosome"/>
</dbReference>
<dbReference type="GO" id="GO:0005829">
    <property type="term" value="C:cytosol"/>
    <property type="evidence" value="ECO:0007669"/>
    <property type="project" value="TreeGrafter"/>
</dbReference>
<dbReference type="GO" id="GO:0015935">
    <property type="term" value="C:small ribosomal subunit"/>
    <property type="evidence" value="ECO:0007669"/>
    <property type="project" value="TreeGrafter"/>
</dbReference>
<dbReference type="GO" id="GO:0019843">
    <property type="term" value="F:rRNA binding"/>
    <property type="evidence" value="ECO:0007669"/>
    <property type="project" value="UniProtKB-UniRule"/>
</dbReference>
<dbReference type="GO" id="GO:0003735">
    <property type="term" value="F:structural constituent of ribosome"/>
    <property type="evidence" value="ECO:0007669"/>
    <property type="project" value="InterPro"/>
</dbReference>
<dbReference type="GO" id="GO:0000049">
    <property type="term" value="F:tRNA binding"/>
    <property type="evidence" value="ECO:0007669"/>
    <property type="project" value="UniProtKB-UniRule"/>
</dbReference>
<dbReference type="GO" id="GO:0006412">
    <property type="term" value="P:translation"/>
    <property type="evidence" value="ECO:0007669"/>
    <property type="project" value="UniProtKB-UniRule"/>
</dbReference>
<dbReference type="FunFam" id="1.10.8.50:FF:000001">
    <property type="entry name" value="30S ribosomal protein S13"/>
    <property type="match status" value="1"/>
</dbReference>
<dbReference type="FunFam" id="4.10.910.10:FF:000001">
    <property type="entry name" value="30S ribosomal protein S13"/>
    <property type="match status" value="1"/>
</dbReference>
<dbReference type="Gene3D" id="1.10.8.50">
    <property type="match status" value="1"/>
</dbReference>
<dbReference type="Gene3D" id="4.10.910.10">
    <property type="entry name" value="30s ribosomal protein s13, domain 2"/>
    <property type="match status" value="1"/>
</dbReference>
<dbReference type="HAMAP" id="MF_01315">
    <property type="entry name" value="Ribosomal_uS13"/>
    <property type="match status" value="1"/>
</dbReference>
<dbReference type="InterPro" id="IPR027437">
    <property type="entry name" value="Rbsml_uS13_C"/>
</dbReference>
<dbReference type="InterPro" id="IPR001892">
    <property type="entry name" value="Ribosomal_uS13"/>
</dbReference>
<dbReference type="InterPro" id="IPR010979">
    <property type="entry name" value="Ribosomal_uS13-like_H2TH"/>
</dbReference>
<dbReference type="InterPro" id="IPR019980">
    <property type="entry name" value="Ribosomal_uS13_bac-type"/>
</dbReference>
<dbReference type="InterPro" id="IPR018269">
    <property type="entry name" value="Ribosomal_uS13_CS"/>
</dbReference>
<dbReference type="NCBIfam" id="TIGR03631">
    <property type="entry name" value="uS13_bact"/>
    <property type="match status" value="1"/>
</dbReference>
<dbReference type="PANTHER" id="PTHR10871">
    <property type="entry name" value="30S RIBOSOMAL PROTEIN S13/40S RIBOSOMAL PROTEIN S18"/>
    <property type="match status" value="1"/>
</dbReference>
<dbReference type="PANTHER" id="PTHR10871:SF1">
    <property type="entry name" value="SMALL RIBOSOMAL SUBUNIT PROTEIN US13M"/>
    <property type="match status" value="1"/>
</dbReference>
<dbReference type="Pfam" id="PF00416">
    <property type="entry name" value="Ribosomal_S13"/>
    <property type="match status" value="1"/>
</dbReference>
<dbReference type="PIRSF" id="PIRSF002134">
    <property type="entry name" value="Ribosomal_S13"/>
    <property type="match status" value="1"/>
</dbReference>
<dbReference type="SUPFAM" id="SSF46946">
    <property type="entry name" value="S13-like H2TH domain"/>
    <property type="match status" value="1"/>
</dbReference>
<dbReference type="PROSITE" id="PS00646">
    <property type="entry name" value="RIBOSOMAL_S13_1"/>
    <property type="match status" value="1"/>
</dbReference>
<dbReference type="PROSITE" id="PS50159">
    <property type="entry name" value="RIBOSOMAL_S13_2"/>
    <property type="match status" value="1"/>
</dbReference>
<organism>
    <name type="scientific">Bacillus thuringiensis subsp. konkukian (strain 97-27)</name>
    <dbReference type="NCBI Taxonomy" id="281309"/>
    <lineage>
        <taxon>Bacteria</taxon>
        <taxon>Bacillati</taxon>
        <taxon>Bacillota</taxon>
        <taxon>Bacilli</taxon>
        <taxon>Bacillales</taxon>
        <taxon>Bacillaceae</taxon>
        <taxon>Bacillus</taxon>
        <taxon>Bacillus cereus group</taxon>
    </lineage>
</organism>
<evidence type="ECO:0000255" key="1">
    <source>
        <dbReference type="HAMAP-Rule" id="MF_01315"/>
    </source>
</evidence>
<evidence type="ECO:0000256" key="2">
    <source>
        <dbReference type="SAM" id="MobiDB-lite"/>
    </source>
</evidence>
<evidence type="ECO:0000305" key="3"/>
<gene>
    <name evidence="1" type="primary">rpsM</name>
    <name type="ordered locus">BT9727_0130</name>
</gene>
<reference key="1">
    <citation type="journal article" date="2006" name="J. Bacteriol.">
        <title>Pathogenomic sequence analysis of Bacillus cereus and Bacillus thuringiensis isolates closely related to Bacillus anthracis.</title>
        <authorList>
            <person name="Han C.S."/>
            <person name="Xie G."/>
            <person name="Challacombe J.F."/>
            <person name="Altherr M.R."/>
            <person name="Bhotika S.S."/>
            <person name="Bruce D."/>
            <person name="Campbell C.S."/>
            <person name="Campbell M.L."/>
            <person name="Chen J."/>
            <person name="Chertkov O."/>
            <person name="Cleland C."/>
            <person name="Dimitrijevic M."/>
            <person name="Doggett N.A."/>
            <person name="Fawcett J.J."/>
            <person name="Glavina T."/>
            <person name="Goodwin L.A."/>
            <person name="Hill K.K."/>
            <person name="Hitchcock P."/>
            <person name="Jackson P.J."/>
            <person name="Keim P."/>
            <person name="Kewalramani A.R."/>
            <person name="Longmire J."/>
            <person name="Lucas S."/>
            <person name="Malfatti S."/>
            <person name="McMurry K."/>
            <person name="Meincke L.J."/>
            <person name="Misra M."/>
            <person name="Moseman B.L."/>
            <person name="Mundt M."/>
            <person name="Munk A.C."/>
            <person name="Okinaka R.T."/>
            <person name="Parson-Quintana B."/>
            <person name="Reilly L.P."/>
            <person name="Richardson P."/>
            <person name="Robinson D.L."/>
            <person name="Rubin E."/>
            <person name="Saunders E."/>
            <person name="Tapia R."/>
            <person name="Tesmer J.G."/>
            <person name="Thayer N."/>
            <person name="Thompson L.S."/>
            <person name="Tice H."/>
            <person name="Ticknor L.O."/>
            <person name="Wills P.L."/>
            <person name="Brettin T.S."/>
            <person name="Gilna P."/>
        </authorList>
    </citation>
    <scope>NUCLEOTIDE SEQUENCE [LARGE SCALE GENOMIC DNA]</scope>
    <source>
        <strain>97-27</strain>
    </source>
</reference>
<sequence length="121" mass="13819">MARIAGVDIPRDKRVVISLTYVFGIGRTTAEKILAEAGISEETRVRDLTEDELGRIRDIIDRIKVEGDLRREVSLNIKRLMEIGSYRGLRHRRGLPVRGQNSKNNARTRKGPRRTVANKKK</sequence>
<accession>Q6HPN4</accession>
<proteinExistence type="inferred from homology"/>
<name>RS13_BACHK</name>
<keyword id="KW-0687">Ribonucleoprotein</keyword>
<keyword id="KW-0689">Ribosomal protein</keyword>
<keyword id="KW-0694">RNA-binding</keyword>
<keyword id="KW-0699">rRNA-binding</keyword>
<keyword id="KW-0820">tRNA-binding</keyword>
<feature type="chain" id="PRO_0000230470" description="Small ribosomal subunit protein uS13">
    <location>
        <begin position="1"/>
        <end position="121"/>
    </location>
</feature>
<feature type="region of interest" description="Disordered" evidence="2">
    <location>
        <begin position="91"/>
        <end position="121"/>
    </location>
</feature>
<feature type="compositionally biased region" description="Basic residues" evidence="2">
    <location>
        <begin position="106"/>
        <end position="121"/>
    </location>
</feature>
<protein>
    <recommendedName>
        <fullName evidence="1">Small ribosomal subunit protein uS13</fullName>
    </recommendedName>
    <alternativeName>
        <fullName evidence="3">30S ribosomal protein S13</fullName>
    </alternativeName>
</protein>
<comment type="function">
    <text evidence="1">Located at the top of the head of the 30S subunit, it contacts several helices of the 16S rRNA. In the 70S ribosome it contacts the 23S rRNA (bridge B1a) and protein L5 of the 50S subunit (bridge B1b), connecting the 2 subunits; these bridges are implicated in subunit movement. Contacts the tRNAs in the A and P-sites.</text>
</comment>
<comment type="subunit">
    <text evidence="1">Part of the 30S ribosomal subunit. Forms a loose heterodimer with protein S19. Forms two bridges to the 50S subunit in the 70S ribosome.</text>
</comment>
<comment type="similarity">
    <text evidence="1">Belongs to the universal ribosomal protein uS13 family.</text>
</comment>